<evidence type="ECO:0000255" key="1">
    <source>
        <dbReference type="HAMAP-Rule" id="MF_00344"/>
    </source>
</evidence>
<organism>
    <name type="scientific">Geobacillus kaustophilus (strain HTA426)</name>
    <dbReference type="NCBI Taxonomy" id="235909"/>
    <lineage>
        <taxon>Bacteria</taxon>
        <taxon>Bacillati</taxon>
        <taxon>Bacillota</taxon>
        <taxon>Bacilli</taxon>
        <taxon>Bacillales</taxon>
        <taxon>Anoxybacillaceae</taxon>
        <taxon>Geobacillus</taxon>
        <taxon>Geobacillus thermoleovorans group</taxon>
    </lineage>
</organism>
<proteinExistence type="inferred from homology"/>
<gene>
    <name evidence="1" type="primary">guaA</name>
    <name type="ordered locus">GK0254</name>
</gene>
<feature type="chain" id="PRO_0000229430" description="GMP synthase [glutamine-hydrolyzing]">
    <location>
        <begin position="1"/>
        <end position="510"/>
    </location>
</feature>
<feature type="domain" description="Glutamine amidotransferase type-1" evidence="1">
    <location>
        <begin position="5"/>
        <end position="195"/>
    </location>
</feature>
<feature type="domain" description="GMPS ATP-PPase" evidence="1">
    <location>
        <begin position="196"/>
        <end position="385"/>
    </location>
</feature>
<feature type="active site" description="Nucleophile" evidence="1">
    <location>
        <position position="82"/>
    </location>
</feature>
<feature type="active site" evidence="1">
    <location>
        <position position="169"/>
    </location>
</feature>
<feature type="active site" evidence="1">
    <location>
        <position position="171"/>
    </location>
</feature>
<feature type="binding site" evidence="1">
    <location>
        <begin position="223"/>
        <end position="229"/>
    </location>
    <ligand>
        <name>ATP</name>
        <dbReference type="ChEBI" id="CHEBI:30616"/>
    </ligand>
</feature>
<sequence length="510" mass="57287">MNQEMIVVLDFGSQYNQLITRRIREFGVYSELHPHTIRAEEIRALNAKGIIFSGGPNSVYDEQAFTCDPAIFELGLPILGICYGMQLMAHHLGGKVEKATHREYGKALIQVKNDSLLFHGLPDEQVVWMSHGDLVTAPPAGFAVDATSPSCPIAAMSDERRKWYGVQFHPEVRHSVYGNDLLKKFVFEVCGCRGDWTMENFIDEQVRRIREQVGGKKVLCALSGGVDSSVAAVLVHRAIGDQLTCIFVDHGLLRKGEAESVMKTFREQFQMNVIKVDAKDRFLAKLKGVTDPEQKRKIIGNEFIYVFDDEAAKLEGIEFLVQGTLYTDIIESGTATAQTIKSHHNVGGLPEDMKFELIEPLNTLFKDEVRALGTQLGIPDEIVWRQPFPGPGLGIRVLGEVTEEKLEIVRESDAILREEVKKAGLDREIWQYFTVLPDIRSVGVMGDARTYDYTVAIRAVTSIDGMTADWARIPWDVLERISTRIVNEVPHVNRVVYDITSKPPATIEWE</sequence>
<keyword id="KW-0067">ATP-binding</keyword>
<keyword id="KW-0315">Glutamine amidotransferase</keyword>
<keyword id="KW-0332">GMP biosynthesis</keyword>
<keyword id="KW-0436">Ligase</keyword>
<keyword id="KW-0547">Nucleotide-binding</keyword>
<keyword id="KW-0658">Purine biosynthesis</keyword>
<keyword id="KW-1185">Reference proteome</keyword>
<protein>
    <recommendedName>
        <fullName evidence="1">GMP synthase [glutamine-hydrolyzing]</fullName>
        <ecNumber evidence="1">6.3.5.2</ecNumber>
    </recommendedName>
    <alternativeName>
        <fullName evidence="1">GMP synthetase</fullName>
    </alternativeName>
    <alternativeName>
        <fullName evidence="1">Glutamine amidotransferase</fullName>
    </alternativeName>
</protein>
<reference key="1">
    <citation type="journal article" date="2004" name="Nucleic Acids Res.">
        <title>Thermoadaptation trait revealed by the genome sequence of thermophilic Geobacillus kaustophilus.</title>
        <authorList>
            <person name="Takami H."/>
            <person name="Takaki Y."/>
            <person name="Chee G.-J."/>
            <person name="Nishi S."/>
            <person name="Shimamura S."/>
            <person name="Suzuki H."/>
            <person name="Matsui S."/>
            <person name="Uchiyama I."/>
        </authorList>
    </citation>
    <scope>NUCLEOTIDE SEQUENCE [LARGE SCALE GENOMIC DNA]</scope>
    <source>
        <strain>HTA426</strain>
    </source>
</reference>
<dbReference type="EC" id="6.3.5.2" evidence="1"/>
<dbReference type="EMBL" id="BA000043">
    <property type="protein sequence ID" value="BAD74539.1"/>
    <property type="molecule type" value="Genomic_DNA"/>
</dbReference>
<dbReference type="RefSeq" id="WP_011229763.1">
    <property type="nucleotide sequence ID" value="NC_006510.1"/>
</dbReference>
<dbReference type="SMR" id="Q5L3E1"/>
<dbReference type="STRING" id="235909.GK0254"/>
<dbReference type="MEROPS" id="C26.957"/>
<dbReference type="KEGG" id="gka:GK0254"/>
<dbReference type="eggNOG" id="COG0518">
    <property type="taxonomic scope" value="Bacteria"/>
</dbReference>
<dbReference type="eggNOG" id="COG0519">
    <property type="taxonomic scope" value="Bacteria"/>
</dbReference>
<dbReference type="HOGENOM" id="CLU_014340_0_5_9"/>
<dbReference type="UniPathway" id="UPA00189">
    <property type="reaction ID" value="UER00296"/>
</dbReference>
<dbReference type="Proteomes" id="UP000001172">
    <property type="component" value="Chromosome"/>
</dbReference>
<dbReference type="GO" id="GO:0005829">
    <property type="term" value="C:cytosol"/>
    <property type="evidence" value="ECO:0007669"/>
    <property type="project" value="TreeGrafter"/>
</dbReference>
<dbReference type="GO" id="GO:0005524">
    <property type="term" value="F:ATP binding"/>
    <property type="evidence" value="ECO:0007669"/>
    <property type="project" value="UniProtKB-UniRule"/>
</dbReference>
<dbReference type="GO" id="GO:0003921">
    <property type="term" value="F:GMP synthase activity"/>
    <property type="evidence" value="ECO:0007669"/>
    <property type="project" value="InterPro"/>
</dbReference>
<dbReference type="CDD" id="cd01742">
    <property type="entry name" value="GATase1_GMP_Synthase"/>
    <property type="match status" value="1"/>
</dbReference>
<dbReference type="CDD" id="cd01997">
    <property type="entry name" value="GMP_synthase_C"/>
    <property type="match status" value="1"/>
</dbReference>
<dbReference type="FunFam" id="3.30.300.10:FF:000002">
    <property type="entry name" value="GMP synthase [glutamine-hydrolyzing]"/>
    <property type="match status" value="1"/>
</dbReference>
<dbReference type="FunFam" id="3.40.50.620:FF:000001">
    <property type="entry name" value="GMP synthase [glutamine-hydrolyzing]"/>
    <property type="match status" value="1"/>
</dbReference>
<dbReference type="FunFam" id="3.40.50.880:FF:000001">
    <property type="entry name" value="GMP synthase [glutamine-hydrolyzing]"/>
    <property type="match status" value="1"/>
</dbReference>
<dbReference type="Gene3D" id="3.30.300.10">
    <property type="match status" value="1"/>
</dbReference>
<dbReference type="Gene3D" id="3.40.50.880">
    <property type="match status" value="1"/>
</dbReference>
<dbReference type="Gene3D" id="3.40.50.620">
    <property type="entry name" value="HUPs"/>
    <property type="match status" value="1"/>
</dbReference>
<dbReference type="HAMAP" id="MF_00344">
    <property type="entry name" value="GMP_synthase"/>
    <property type="match status" value="1"/>
</dbReference>
<dbReference type="InterPro" id="IPR029062">
    <property type="entry name" value="Class_I_gatase-like"/>
</dbReference>
<dbReference type="InterPro" id="IPR017926">
    <property type="entry name" value="GATASE"/>
</dbReference>
<dbReference type="InterPro" id="IPR001674">
    <property type="entry name" value="GMP_synth_C"/>
</dbReference>
<dbReference type="InterPro" id="IPR004739">
    <property type="entry name" value="GMP_synth_GATase"/>
</dbReference>
<dbReference type="InterPro" id="IPR022955">
    <property type="entry name" value="GMP_synthase"/>
</dbReference>
<dbReference type="InterPro" id="IPR025777">
    <property type="entry name" value="GMPS_ATP_PPase_dom"/>
</dbReference>
<dbReference type="InterPro" id="IPR022310">
    <property type="entry name" value="NAD/GMP_synthase"/>
</dbReference>
<dbReference type="InterPro" id="IPR014729">
    <property type="entry name" value="Rossmann-like_a/b/a_fold"/>
</dbReference>
<dbReference type="NCBIfam" id="TIGR00884">
    <property type="entry name" value="guaA_Cterm"/>
    <property type="match status" value="1"/>
</dbReference>
<dbReference type="NCBIfam" id="TIGR00888">
    <property type="entry name" value="guaA_Nterm"/>
    <property type="match status" value="1"/>
</dbReference>
<dbReference type="NCBIfam" id="NF000848">
    <property type="entry name" value="PRK00074.1"/>
    <property type="match status" value="1"/>
</dbReference>
<dbReference type="PANTHER" id="PTHR11922:SF2">
    <property type="entry name" value="GMP SYNTHASE [GLUTAMINE-HYDROLYZING]"/>
    <property type="match status" value="1"/>
</dbReference>
<dbReference type="PANTHER" id="PTHR11922">
    <property type="entry name" value="GMP SYNTHASE-RELATED"/>
    <property type="match status" value="1"/>
</dbReference>
<dbReference type="Pfam" id="PF00117">
    <property type="entry name" value="GATase"/>
    <property type="match status" value="1"/>
</dbReference>
<dbReference type="Pfam" id="PF00958">
    <property type="entry name" value="GMP_synt_C"/>
    <property type="match status" value="1"/>
</dbReference>
<dbReference type="Pfam" id="PF02540">
    <property type="entry name" value="NAD_synthase"/>
    <property type="match status" value="1"/>
</dbReference>
<dbReference type="PRINTS" id="PR00097">
    <property type="entry name" value="ANTSNTHASEII"/>
</dbReference>
<dbReference type="PRINTS" id="PR00099">
    <property type="entry name" value="CPSGATASE"/>
</dbReference>
<dbReference type="PRINTS" id="PR00096">
    <property type="entry name" value="GATASE"/>
</dbReference>
<dbReference type="SUPFAM" id="SSF52402">
    <property type="entry name" value="Adenine nucleotide alpha hydrolases-like"/>
    <property type="match status" value="1"/>
</dbReference>
<dbReference type="SUPFAM" id="SSF52317">
    <property type="entry name" value="Class I glutamine amidotransferase-like"/>
    <property type="match status" value="1"/>
</dbReference>
<dbReference type="SUPFAM" id="SSF54810">
    <property type="entry name" value="GMP synthetase C-terminal dimerisation domain"/>
    <property type="match status" value="1"/>
</dbReference>
<dbReference type="PROSITE" id="PS51273">
    <property type="entry name" value="GATASE_TYPE_1"/>
    <property type="match status" value="1"/>
</dbReference>
<dbReference type="PROSITE" id="PS51553">
    <property type="entry name" value="GMPS_ATP_PPASE"/>
    <property type="match status" value="1"/>
</dbReference>
<comment type="function">
    <text evidence="1">Catalyzes the synthesis of GMP from XMP.</text>
</comment>
<comment type="catalytic activity">
    <reaction evidence="1">
        <text>XMP + L-glutamine + ATP + H2O = GMP + L-glutamate + AMP + diphosphate + 2 H(+)</text>
        <dbReference type="Rhea" id="RHEA:11680"/>
        <dbReference type="ChEBI" id="CHEBI:15377"/>
        <dbReference type="ChEBI" id="CHEBI:15378"/>
        <dbReference type="ChEBI" id="CHEBI:29985"/>
        <dbReference type="ChEBI" id="CHEBI:30616"/>
        <dbReference type="ChEBI" id="CHEBI:33019"/>
        <dbReference type="ChEBI" id="CHEBI:57464"/>
        <dbReference type="ChEBI" id="CHEBI:58115"/>
        <dbReference type="ChEBI" id="CHEBI:58359"/>
        <dbReference type="ChEBI" id="CHEBI:456215"/>
        <dbReference type="EC" id="6.3.5.2"/>
    </reaction>
</comment>
<comment type="pathway">
    <text evidence="1">Purine metabolism; GMP biosynthesis; GMP from XMP (L-Gln route): step 1/1.</text>
</comment>
<comment type="subunit">
    <text evidence="1">Homodimer.</text>
</comment>
<name>GUAA_GEOKA</name>
<accession>Q5L3E1</accession>